<reference key="1">
    <citation type="journal article" date="2007" name="Nat. Biotechnol.">
        <title>Comparative analysis of the complete genome sequence of the plant growth-promoting bacterium Bacillus amyloliquefaciens FZB42.</title>
        <authorList>
            <person name="Chen X.H."/>
            <person name="Koumoutsi A."/>
            <person name="Scholz R."/>
            <person name="Eisenreich A."/>
            <person name="Schneider K."/>
            <person name="Heinemeyer I."/>
            <person name="Morgenstern B."/>
            <person name="Voss B."/>
            <person name="Hess W.R."/>
            <person name="Reva O."/>
            <person name="Junge H."/>
            <person name="Voigt B."/>
            <person name="Jungblut P.R."/>
            <person name="Vater J."/>
            <person name="Suessmuth R."/>
            <person name="Liesegang H."/>
            <person name="Strittmatter A."/>
            <person name="Gottschalk G."/>
            <person name="Borriss R."/>
        </authorList>
    </citation>
    <scope>NUCLEOTIDE SEQUENCE [LARGE SCALE GENOMIC DNA]</scope>
    <source>
        <strain>DSM 23117 / BGSC 10A6 / LMG 26770 / FZB42</strain>
    </source>
</reference>
<dbReference type="EC" id="3.6.1.9" evidence="1"/>
<dbReference type="EMBL" id="CP000560">
    <property type="protein sequence ID" value="ABS74870.1"/>
    <property type="molecule type" value="Genomic_DNA"/>
</dbReference>
<dbReference type="RefSeq" id="WP_012118105.1">
    <property type="nucleotide sequence ID" value="NC_009725.2"/>
</dbReference>
<dbReference type="SMR" id="A7Z794"/>
<dbReference type="GeneID" id="93081652"/>
<dbReference type="KEGG" id="bay:RBAM_025100"/>
<dbReference type="HOGENOM" id="CLU_040416_0_0_9"/>
<dbReference type="Proteomes" id="UP000001120">
    <property type="component" value="Chromosome"/>
</dbReference>
<dbReference type="GO" id="GO:0005737">
    <property type="term" value="C:cytoplasm"/>
    <property type="evidence" value="ECO:0007669"/>
    <property type="project" value="UniProtKB-SubCell"/>
</dbReference>
<dbReference type="GO" id="GO:0036218">
    <property type="term" value="F:dTTP diphosphatase activity"/>
    <property type="evidence" value="ECO:0007669"/>
    <property type="project" value="RHEA"/>
</dbReference>
<dbReference type="GO" id="GO:0036221">
    <property type="term" value="F:UTP diphosphatase activity"/>
    <property type="evidence" value="ECO:0007669"/>
    <property type="project" value="RHEA"/>
</dbReference>
<dbReference type="GO" id="GO:0009117">
    <property type="term" value="P:nucleotide metabolic process"/>
    <property type="evidence" value="ECO:0007669"/>
    <property type="project" value="UniProtKB-KW"/>
</dbReference>
<dbReference type="CDD" id="cd00555">
    <property type="entry name" value="Maf"/>
    <property type="match status" value="1"/>
</dbReference>
<dbReference type="FunFam" id="3.90.950.10:FF:000005">
    <property type="entry name" value="7-methyl-GTP pyrophosphatase"/>
    <property type="match status" value="1"/>
</dbReference>
<dbReference type="Gene3D" id="3.90.950.10">
    <property type="match status" value="1"/>
</dbReference>
<dbReference type="HAMAP" id="MF_00528">
    <property type="entry name" value="Maf"/>
    <property type="match status" value="1"/>
</dbReference>
<dbReference type="InterPro" id="IPR029001">
    <property type="entry name" value="ITPase-like_fam"/>
</dbReference>
<dbReference type="InterPro" id="IPR003697">
    <property type="entry name" value="Maf-like"/>
</dbReference>
<dbReference type="NCBIfam" id="TIGR00172">
    <property type="entry name" value="maf"/>
    <property type="match status" value="1"/>
</dbReference>
<dbReference type="PANTHER" id="PTHR43213">
    <property type="entry name" value="BIFUNCTIONAL DTTP/UTP PYROPHOSPHATASE/METHYLTRANSFERASE PROTEIN-RELATED"/>
    <property type="match status" value="1"/>
</dbReference>
<dbReference type="PANTHER" id="PTHR43213:SF5">
    <property type="entry name" value="BIFUNCTIONAL DTTP_UTP PYROPHOSPHATASE_METHYLTRANSFERASE PROTEIN-RELATED"/>
    <property type="match status" value="1"/>
</dbReference>
<dbReference type="Pfam" id="PF02545">
    <property type="entry name" value="Maf"/>
    <property type="match status" value="1"/>
</dbReference>
<dbReference type="PIRSF" id="PIRSF006305">
    <property type="entry name" value="Maf"/>
    <property type="match status" value="1"/>
</dbReference>
<dbReference type="SUPFAM" id="SSF52972">
    <property type="entry name" value="ITPase-like"/>
    <property type="match status" value="1"/>
</dbReference>
<name>NTPPA_BACVZ</name>
<feature type="chain" id="PRO_1000060932" description="dTTP/UTP pyrophosphatase">
    <location>
        <begin position="1"/>
        <end position="189"/>
    </location>
</feature>
<feature type="active site" description="Proton acceptor" evidence="1">
    <location>
        <position position="70"/>
    </location>
</feature>
<feature type="site" description="Important for substrate specificity" evidence="1">
    <location>
        <position position="13"/>
    </location>
</feature>
<feature type="site" description="Important for substrate specificity" evidence="1">
    <location>
        <position position="71"/>
    </location>
</feature>
<feature type="site" description="Important for substrate specificity" evidence="1">
    <location>
        <position position="153"/>
    </location>
</feature>
<sequence>MTKRLILASQSPRRKELLNLLQIPYSIIASRTEEKLNRNLSPEENVQCLAEQKAGAVLAENPDAVVIGADTMVCIDGECLGKPHDREEAAHMLRRLSGRSHQVITAVSIQTHDRKETFCDTTEVTFWPLSEDDIQLYIETKEPMDKAGAYGIQGKGALLVKKIDGDFYSVVGLPVAKTMRALKEFNIKA</sequence>
<organism>
    <name type="scientific">Bacillus velezensis (strain DSM 23117 / BGSC 10A6 / LMG 26770 / FZB42)</name>
    <name type="common">Bacillus amyloliquefaciens subsp. plantarum</name>
    <dbReference type="NCBI Taxonomy" id="326423"/>
    <lineage>
        <taxon>Bacteria</taxon>
        <taxon>Bacillati</taxon>
        <taxon>Bacillota</taxon>
        <taxon>Bacilli</taxon>
        <taxon>Bacillales</taxon>
        <taxon>Bacillaceae</taxon>
        <taxon>Bacillus</taxon>
        <taxon>Bacillus amyloliquefaciens group</taxon>
    </lineage>
</organism>
<protein>
    <recommendedName>
        <fullName evidence="1">dTTP/UTP pyrophosphatase</fullName>
        <shortName evidence="1">dTTPase/UTPase</shortName>
        <ecNumber evidence="1">3.6.1.9</ecNumber>
    </recommendedName>
    <alternativeName>
        <fullName evidence="1">Nucleoside triphosphate pyrophosphatase</fullName>
    </alternativeName>
    <alternativeName>
        <fullName evidence="1">Nucleotide pyrophosphatase</fullName>
        <shortName evidence="1">Nucleotide PPase</shortName>
    </alternativeName>
</protein>
<gene>
    <name type="primary">maf</name>
    <name type="ordered locus">RBAM_025100</name>
</gene>
<keyword id="KW-0963">Cytoplasm</keyword>
<keyword id="KW-0378">Hydrolase</keyword>
<keyword id="KW-0546">Nucleotide metabolism</keyword>
<proteinExistence type="inferred from homology"/>
<evidence type="ECO:0000255" key="1">
    <source>
        <dbReference type="HAMAP-Rule" id="MF_00528"/>
    </source>
</evidence>
<comment type="function">
    <text evidence="1">Nucleoside triphosphate pyrophosphatase that hydrolyzes dTTP and UTP. May have a dual role in cell division arrest and in preventing the incorporation of modified nucleotides into cellular nucleic acids.</text>
</comment>
<comment type="catalytic activity">
    <reaction evidence="1">
        <text>dTTP + H2O = dTMP + diphosphate + H(+)</text>
        <dbReference type="Rhea" id="RHEA:28534"/>
        <dbReference type="ChEBI" id="CHEBI:15377"/>
        <dbReference type="ChEBI" id="CHEBI:15378"/>
        <dbReference type="ChEBI" id="CHEBI:33019"/>
        <dbReference type="ChEBI" id="CHEBI:37568"/>
        <dbReference type="ChEBI" id="CHEBI:63528"/>
        <dbReference type="EC" id="3.6.1.9"/>
    </reaction>
</comment>
<comment type="catalytic activity">
    <reaction evidence="1">
        <text>UTP + H2O = UMP + diphosphate + H(+)</text>
        <dbReference type="Rhea" id="RHEA:29395"/>
        <dbReference type="ChEBI" id="CHEBI:15377"/>
        <dbReference type="ChEBI" id="CHEBI:15378"/>
        <dbReference type="ChEBI" id="CHEBI:33019"/>
        <dbReference type="ChEBI" id="CHEBI:46398"/>
        <dbReference type="ChEBI" id="CHEBI:57865"/>
        <dbReference type="EC" id="3.6.1.9"/>
    </reaction>
</comment>
<comment type="cofactor">
    <cofactor evidence="1">
        <name>a divalent metal cation</name>
        <dbReference type="ChEBI" id="CHEBI:60240"/>
    </cofactor>
</comment>
<comment type="subcellular location">
    <subcellularLocation>
        <location evidence="1">Cytoplasm</location>
    </subcellularLocation>
</comment>
<comment type="similarity">
    <text evidence="1">Belongs to the Maf family. YhdE subfamily.</text>
</comment>
<accession>A7Z794</accession>